<name>RS11_PYRHO</name>
<gene>
    <name evidence="1" type="primary">rps11</name>
    <name type="ordered locus">PH1638</name>
</gene>
<keyword id="KW-0687">Ribonucleoprotein</keyword>
<keyword id="KW-0689">Ribosomal protein</keyword>
<keyword id="KW-0694">RNA-binding</keyword>
<keyword id="KW-0699">rRNA-binding</keyword>
<evidence type="ECO:0000255" key="1">
    <source>
        <dbReference type="HAMAP-Rule" id="MF_01310"/>
    </source>
</evidence>
<evidence type="ECO:0000256" key="2">
    <source>
        <dbReference type="SAM" id="MobiDB-lite"/>
    </source>
</evidence>
<evidence type="ECO:0000305" key="3"/>
<reference key="1">
    <citation type="journal article" date="1998" name="DNA Res.">
        <title>Complete sequence and gene organization of the genome of a hyper-thermophilic archaebacterium, Pyrococcus horikoshii OT3.</title>
        <authorList>
            <person name="Kawarabayasi Y."/>
            <person name="Sawada M."/>
            <person name="Horikawa H."/>
            <person name="Haikawa Y."/>
            <person name="Hino Y."/>
            <person name="Yamamoto S."/>
            <person name="Sekine M."/>
            <person name="Baba S."/>
            <person name="Kosugi H."/>
            <person name="Hosoyama A."/>
            <person name="Nagai Y."/>
            <person name="Sakai M."/>
            <person name="Ogura K."/>
            <person name="Otsuka R."/>
            <person name="Nakazawa H."/>
            <person name="Takamiya M."/>
            <person name="Ohfuku Y."/>
            <person name="Funahashi T."/>
            <person name="Tanaka T."/>
            <person name="Kudoh Y."/>
            <person name="Yamazaki J."/>
            <person name="Kushida N."/>
            <person name="Oguchi A."/>
            <person name="Aoki K."/>
            <person name="Yoshizawa T."/>
            <person name="Nakamura Y."/>
            <person name="Robb F.T."/>
            <person name="Horikoshi K."/>
            <person name="Masuchi Y."/>
            <person name="Shizuya H."/>
            <person name="Kikuchi H."/>
        </authorList>
    </citation>
    <scope>NUCLEOTIDE SEQUENCE [LARGE SCALE GENOMIC DNA]</scope>
    <source>
        <strain>ATCC 700860 / DSM 12428 / JCM 9974 / NBRC 100139 / OT-3</strain>
    </source>
</reference>
<sequence>MSEEQVNIKKKEKWGIAHIYSSYNNTIIHITDITGAETISRWSGGMVVKADRDEPSPYAAMLAARRAAEEALEKGIVGVHIRVRAPGGSKSKTPGPGAQAAIRALARAGLKIGRVEDVTPIPHDGTRPKGGRRGRRV</sequence>
<dbReference type="EMBL" id="BA000001">
    <property type="protein sequence ID" value="BAA30750.1"/>
    <property type="molecule type" value="Genomic_DNA"/>
</dbReference>
<dbReference type="PIR" id="F71043">
    <property type="entry name" value="F71043"/>
</dbReference>
<dbReference type="RefSeq" id="WP_010867653.1">
    <property type="nucleotide sequence ID" value="NC_000961.1"/>
</dbReference>
<dbReference type="SMR" id="P62011"/>
<dbReference type="STRING" id="70601.gene:9378630"/>
<dbReference type="EnsemblBacteria" id="BAA30750">
    <property type="protein sequence ID" value="BAA30750"/>
    <property type="gene ID" value="BAA30750"/>
</dbReference>
<dbReference type="GeneID" id="1442488"/>
<dbReference type="KEGG" id="pho:PH1638"/>
<dbReference type="eggNOG" id="arCOG04240">
    <property type="taxonomic scope" value="Archaea"/>
</dbReference>
<dbReference type="OrthoDB" id="12054at2157"/>
<dbReference type="Proteomes" id="UP000000752">
    <property type="component" value="Chromosome"/>
</dbReference>
<dbReference type="GO" id="GO:1990904">
    <property type="term" value="C:ribonucleoprotein complex"/>
    <property type="evidence" value="ECO:0007669"/>
    <property type="project" value="UniProtKB-KW"/>
</dbReference>
<dbReference type="GO" id="GO:0005840">
    <property type="term" value="C:ribosome"/>
    <property type="evidence" value="ECO:0007669"/>
    <property type="project" value="UniProtKB-KW"/>
</dbReference>
<dbReference type="GO" id="GO:0019843">
    <property type="term" value="F:rRNA binding"/>
    <property type="evidence" value="ECO:0007669"/>
    <property type="project" value="UniProtKB-UniRule"/>
</dbReference>
<dbReference type="GO" id="GO:0003735">
    <property type="term" value="F:structural constituent of ribosome"/>
    <property type="evidence" value="ECO:0007669"/>
    <property type="project" value="InterPro"/>
</dbReference>
<dbReference type="GO" id="GO:0006412">
    <property type="term" value="P:translation"/>
    <property type="evidence" value="ECO:0007669"/>
    <property type="project" value="UniProtKB-UniRule"/>
</dbReference>
<dbReference type="FunFam" id="3.30.420.80:FF:000007">
    <property type="entry name" value="30S ribosomal protein S11"/>
    <property type="match status" value="1"/>
</dbReference>
<dbReference type="Gene3D" id="3.30.420.80">
    <property type="entry name" value="Ribosomal protein S11"/>
    <property type="match status" value="1"/>
</dbReference>
<dbReference type="HAMAP" id="MF_01310">
    <property type="entry name" value="Ribosomal_uS11"/>
    <property type="match status" value="1"/>
</dbReference>
<dbReference type="InterPro" id="IPR001971">
    <property type="entry name" value="Ribosomal_uS11"/>
</dbReference>
<dbReference type="InterPro" id="IPR019961">
    <property type="entry name" value="Ribosomal_uS11_archaeal"/>
</dbReference>
<dbReference type="InterPro" id="IPR018102">
    <property type="entry name" value="Ribosomal_uS11_CS"/>
</dbReference>
<dbReference type="InterPro" id="IPR036967">
    <property type="entry name" value="Ribosomal_uS11_sf"/>
</dbReference>
<dbReference type="NCBIfam" id="TIGR03628">
    <property type="entry name" value="arch_S11P"/>
    <property type="match status" value="1"/>
</dbReference>
<dbReference type="NCBIfam" id="NF007176">
    <property type="entry name" value="PRK09607.1"/>
    <property type="match status" value="1"/>
</dbReference>
<dbReference type="PANTHER" id="PTHR11759">
    <property type="entry name" value="40S RIBOSOMAL PROTEIN S14/30S RIBOSOMAL PROTEIN S11"/>
    <property type="match status" value="1"/>
</dbReference>
<dbReference type="Pfam" id="PF00411">
    <property type="entry name" value="Ribosomal_S11"/>
    <property type="match status" value="1"/>
</dbReference>
<dbReference type="PIRSF" id="PIRSF002131">
    <property type="entry name" value="Ribosomal_S11"/>
    <property type="match status" value="1"/>
</dbReference>
<dbReference type="SUPFAM" id="SSF53137">
    <property type="entry name" value="Translational machinery components"/>
    <property type="match status" value="1"/>
</dbReference>
<dbReference type="PROSITE" id="PS00054">
    <property type="entry name" value="RIBOSOMAL_S11"/>
    <property type="match status" value="1"/>
</dbReference>
<comment type="function">
    <text evidence="1">Located on the platform of the 30S subunit.</text>
</comment>
<comment type="subunit">
    <text evidence="1">Part of the 30S ribosomal subunit.</text>
</comment>
<comment type="similarity">
    <text evidence="1">Belongs to the universal ribosomal protein uS11 family.</text>
</comment>
<feature type="chain" id="PRO_0000123280" description="Small ribosomal subunit protein uS11">
    <location>
        <begin position="1"/>
        <end position="137"/>
    </location>
</feature>
<feature type="region of interest" description="Disordered" evidence="2">
    <location>
        <begin position="116"/>
        <end position="137"/>
    </location>
</feature>
<proteinExistence type="inferred from homology"/>
<protein>
    <recommendedName>
        <fullName evidence="1">Small ribosomal subunit protein uS11</fullName>
    </recommendedName>
    <alternativeName>
        <fullName evidence="3">30S ribosomal protein S11</fullName>
    </alternativeName>
</protein>
<accession>P62011</accession>
<accession>O59304</accession>
<organism>
    <name type="scientific">Pyrococcus horikoshii (strain ATCC 700860 / DSM 12428 / JCM 9974 / NBRC 100139 / OT-3)</name>
    <dbReference type="NCBI Taxonomy" id="70601"/>
    <lineage>
        <taxon>Archaea</taxon>
        <taxon>Methanobacteriati</taxon>
        <taxon>Methanobacteriota</taxon>
        <taxon>Thermococci</taxon>
        <taxon>Thermococcales</taxon>
        <taxon>Thermococcaceae</taxon>
        <taxon>Pyrococcus</taxon>
    </lineage>
</organism>